<protein>
    <recommendedName>
        <fullName evidence="6">Protein disulfide isomerase Creld2</fullName>
        <ecNumber evidence="7">5.3.4.1</ecNumber>
    </recommendedName>
    <alternativeName>
        <fullName evidence="6">Cysteine-rich with EGF-like domain protein 2</fullName>
    </alternativeName>
</protein>
<keyword id="KW-0106">Calcium</keyword>
<keyword id="KW-1015">Disulfide bond</keyword>
<keyword id="KW-0245">EGF-like domain</keyword>
<keyword id="KW-0256">Endoplasmic reticulum</keyword>
<keyword id="KW-0325">Glycoprotein</keyword>
<keyword id="KW-0413">Isomerase</keyword>
<keyword id="KW-0676">Redox-active center</keyword>
<keyword id="KW-1185">Reference proteome</keyword>
<keyword id="KW-0677">Repeat</keyword>
<keyword id="KW-0732">Signal</keyword>
<dbReference type="EC" id="5.3.4.1" evidence="7"/>
<dbReference type="EMBL" id="AK017880">
    <property type="protein sequence ID" value="BAB30986.1"/>
    <property type="molecule type" value="mRNA"/>
</dbReference>
<dbReference type="EMBL" id="AK165884">
    <property type="protein sequence ID" value="BAE38436.1"/>
    <property type="molecule type" value="mRNA"/>
</dbReference>
<dbReference type="EMBL" id="BC047370">
    <property type="protein sequence ID" value="AAH47370.1"/>
    <property type="molecule type" value="mRNA"/>
</dbReference>
<dbReference type="CCDS" id="CCDS27733.1"/>
<dbReference type="RefSeq" id="NP_083996.1">
    <property type="nucleotide sequence ID" value="NM_029720.2"/>
</dbReference>
<dbReference type="BioGRID" id="218289">
    <property type="interactions" value="5"/>
</dbReference>
<dbReference type="FunCoup" id="Q9CYA0">
    <property type="interactions" value="1147"/>
</dbReference>
<dbReference type="IntAct" id="Q9CYA0">
    <property type="interactions" value="16"/>
</dbReference>
<dbReference type="MINT" id="Q9CYA0"/>
<dbReference type="STRING" id="10090.ENSMUSP00000024042"/>
<dbReference type="GlyConnect" id="2248">
    <property type="glycosylation" value="2 N-Linked glycans (1 site)"/>
</dbReference>
<dbReference type="GlyCosmos" id="Q9CYA0">
    <property type="glycosylation" value="2 sites, 2 glycans"/>
</dbReference>
<dbReference type="GlyGen" id="Q9CYA0">
    <property type="glycosylation" value="2 sites, 3 N-linked glycans (1 site)"/>
</dbReference>
<dbReference type="iPTMnet" id="Q9CYA0"/>
<dbReference type="PhosphoSitePlus" id="Q9CYA0"/>
<dbReference type="SwissPalm" id="Q9CYA0"/>
<dbReference type="jPOST" id="Q9CYA0"/>
<dbReference type="PaxDb" id="10090-ENSMUSP00000024042"/>
<dbReference type="PeptideAtlas" id="Q9CYA0"/>
<dbReference type="ProteomicsDB" id="285307"/>
<dbReference type="Pumba" id="Q9CYA0"/>
<dbReference type="Antibodypedia" id="200">
    <property type="antibodies" value="207 antibodies from 26 providers"/>
</dbReference>
<dbReference type="DNASU" id="76737"/>
<dbReference type="Ensembl" id="ENSMUST00000024042.5">
    <property type="protein sequence ID" value="ENSMUSP00000024042.4"/>
    <property type="gene ID" value="ENSMUSG00000023272.5"/>
</dbReference>
<dbReference type="GeneID" id="76737"/>
<dbReference type="KEGG" id="mmu:76737"/>
<dbReference type="UCSC" id="uc007xep.1">
    <property type="organism name" value="mouse"/>
</dbReference>
<dbReference type="AGR" id="MGI:1923987"/>
<dbReference type="CTD" id="79174"/>
<dbReference type="MGI" id="MGI:1923987">
    <property type="gene designation" value="Creld2"/>
</dbReference>
<dbReference type="VEuPathDB" id="HostDB:ENSMUSG00000023272"/>
<dbReference type="eggNOG" id="KOG4260">
    <property type="taxonomic scope" value="Eukaryota"/>
</dbReference>
<dbReference type="GeneTree" id="ENSGT00940000160071"/>
<dbReference type="HOGENOM" id="CLU_038974_1_0_1"/>
<dbReference type="InParanoid" id="Q9CYA0"/>
<dbReference type="OMA" id="TDNFNKG"/>
<dbReference type="OrthoDB" id="19903at2759"/>
<dbReference type="PhylomeDB" id="Q9CYA0"/>
<dbReference type="TreeFam" id="TF316507"/>
<dbReference type="BioGRID-ORCS" id="76737">
    <property type="hits" value="5 hits in 80 CRISPR screens"/>
</dbReference>
<dbReference type="ChiTaRS" id="Creld2">
    <property type="organism name" value="mouse"/>
</dbReference>
<dbReference type="PRO" id="PR:Q9CYA0"/>
<dbReference type="Proteomes" id="UP000000589">
    <property type="component" value="Chromosome 15"/>
</dbReference>
<dbReference type="RNAct" id="Q9CYA0">
    <property type="molecule type" value="protein"/>
</dbReference>
<dbReference type="Bgee" id="ENSMUSG00000023272">
    <property type="expression patterns" value="Expressed in prostate gland ventral lobe and 271 other cell types or tissues"/>
</dbReference>
<dbReference type="GO" id="GO:0005783">
    <property type="term" value="C:endoplasmic reticulum"/>
    <property type="evidence" value="ECO:0000314"/>
    <property type="project" value="MGI"/>
</dbReference>
<dbReference type="GO" id="GO:0005615">
    <property type="term" value="C:extracellular space"/>
    <property type="evidence" value="ECO:0000314"/>
    <property type="project" value="MGI"/>
</dbReference>
<dbReference type="GO" id="GO:0005794">
    <property type="term" value="C:Golgi apparatus"/>
    <property type="evidence" value="ECO:0000314"/>
    <property type="project" value="MGI"/>
</dbReference>
<dbReference type="GO" id="GO:0005509">
    <property type="term" value="F:calcium ion binding"/>
    <property type="evidence" value="ECO:0007669"/>
    <property type="project" value="InterPro"/>
</dbReference>
<dbReference type="GO" id="GO:0003756">
    <property type="term" value="F:protein disulfide isomerase activity"/>
    <property type="evidence" value="ECO:0007669"/>
    <property type="project" value="UniProtKB-EC"/>
</dbReference>
<dbReference type="CDD" id="cd00064">
    <property type="entry name" value="FU"/>
    <property type="match status" value="2"/>
</dbReference>
<dbReference type="FunFam" id="2.10.25.10:FF:000038">
    <property type="entry name" value="Fibrillin 2"/>
    <property type="match status" value="1"/>
</dbReference>
<dbReference type="Gene3D" id="2.10.220.10">
    <property type="entry name" value="Hormone Receptor, Insulin-like Growth Factor Receptor 1, Chain A, domain 2"/>
    <property type="match status" value="1"/>
</dbReference>
<dbReference type="Gene3D" id="2.10.25.10">
    <property type="entry name" value="Laminin"/>
    <property type="match status" value="1"/>
</dbReference>
<dbReference type="InterPro" id="IPR001881">
    <property type="entry name" value="EGF-like_Ca-bd_dom"/>
</dbReference>
<dbReference type="InterPro" id="IPR000742">
    <property type="entry name" value="EGF-like_dom"/>
</dbReference>
<dbReference type="InterPro" id="IPR000152">
    <property type="entry name" value="EGF-type_Asp/Asn_hydroxyl_site"/>
</dbReference>
<dbReference type="InterPro" id="IPR018097">
    <property type="entry name" value="EGF_Ca-bd_CS"/>
</dbReference>
<dbReference type="InterPro" id="IPR006212">
    <property type="entry name" value="Furin_repeat"/>
</dbReference>
<dbReference type="InterPro" id="IPR009030">
    <property type="entry name" value="Growth_fac_rcpt_cys_sf"/>
</dbReference>
<dbReference type="InterPro" id="IPR002049">
    <property type="entry name" value="LE_dom"/>
</dbReference>
<dbReference type="InterPro" id="IPR049883">
    <property type="entry name" value="NOTCH1_EGF-like"/>
</dbReference>
<dbReference type="PANTHER" id="PTHR24039:SF28">
    <property type="entry name" value="EGF-LIKE DOMAIN-CONTAINING PROTEIN"/>
    <property type="match status" value="1"/>
</dbReference>
<dbReference type="PANTHER" id="PTHR24039">
    <property type="entry name" value="FIBRILLIN-RELATED"/>
    <property type="match status" value="1"/>
</dbReference>
<dbReference type="Pfam" id="PF07645">
    <property type="entry name" value="EGF_CA"/>
    <property type="match status" value="2"/>
</dbReference>
<dbReference type="SMART" id="SM00181">
    <property type="entry name" value="EGF"/>
    <property type="match status" value="4"/>
</dbReference>
<dbReference type="SMART" id="SM00179">
    <property type="entry name" value="EGF_CA"/>
    <property type="match status" value="2"/>
</dbReference>
<dbReference type="SMART" id="SM00261">
    <property type="entry name" value="FU"/>
    <property type="match status" value="2"/>
</dbReference>
<dbReference type="SUPFAM" id="SSF57184">
    <property type="entry name" value="Growth factor receptor domain"/>
    <property type="match status" value="1"/>
</dbReference>
<dbReference type="PROSITE" id="PS00010">
    <property type="entry name" value="ASX_HYDROXYL"/>
    <property type="match status" value="1"/>
</dbReference>
<dbReference type="PROSITE" id="PS00022">
    <property type="entry name" value="EGF_1"/>
    <property type="match status" value="1"/>
</dbReference>
<dbReference type="PROSITE" id="PS01186">
    <property type="entry name" value="EGF_2"/>
    <property type="match status" value="2"/>
</dbReference>
<dbReference type="PROSITE" id="PS50026">
    <property type="entry name" value="EGF_3"/>
    <property type="match status" value="2"/>
</dbReference>
<dbReference type="PROSITE" id="PS01187">
    <property type="entry name" value="EGF_CA"/>
    <property type="match status" value="2"/>
</dbReference>
<gene>
    <name type="primary">Creld2</name>
</gene>
<organism>
    <name type="scientific">Mus musculus</name>
    <name type="common">Mouse</name>
    <dbReference type="NCBI Taxonomy" id="10090"/>
    <lineage>
        <taxon>Eukaryota</taxon>
        <taxon>Metazoa</taxon>
        <taxon>Chordata</taxon>
        <taxon>Craniata</taxon>
        <taxon>Vertebrata</taxon>
        <taxon>Euteleostomi</taxon>
        <taxon>Mammalia</taxon>
        <taxon>Eutheria</taxon>
        <taxon>Euarchontoglires</taxon>
        <taxon>Glires</taxon>
        <taxon>Rodentia</taxon>
        <taxon>Myomorpha</taxon>
        <taxon>Muroidea</taxon>
        <taxon>Muridae</taxon>
        <taxon>Murinae</taxon>
        <taxon>Mus</taxon>
        <taxon>Mus</taxon>
    </lineage>
</organism>
<feature type="signal peptide" evidence="3">
    <location>
        <begin position="1"/>
        <end position="22"/>
    </location>
</feature>
<feature type="chain" id="PRO_0000256246" description="Protein disulfide isomerase Creld2">
    <location>
        <begin position="23"/>
        <end position="350"/>
    </location>
</feature>
<feature type="domain" description="EGF-like 1" evidence="4">
    <location>
        <begin position="134"/>
        <end position="176"/>
    </location>
</feature>
<feature type="repeat" description="FU 1">
    <location>
        <begin position="191"/>
        <end position="238"/>
    </location>
</feature>
<feature type="repeat" description="FU 2">
    <location>
        <begin position="251"/>
        <end position="298"/>
    </location>
</feature>
<feature type="domain" description="EGF-like 2; calcium-binding" evidence="4">
    <location>
        <begin position="288"/>
        <end position="329"/>
    </location>
</feature>
<feature type="short sequence motif" description="CXXC" evidence="7">
    <location>
        <begin position="29"/>
        <end position="32"/>
    </location>
</feature>
<feature type="short sequence motif" description="CXXC" evidence="7">
    <location>
        <begin position="261"/>
        <end position="264"/>
    </location>
</feature>
<feature type="glycosylation site" description="N-linked (GlcNAc...) asparagine" evidence="3">
    <location>
        <position position="249"/>
    </location>
</feature>
<feature type="disulfide bond" description="Redox-active" evidence="5">
    <location>
        <begin position="29"/>
        <end position="32"/>
    </location>
</feature>
<feature type="disulfide bond" evidence="4">
    <location>
        <begin position="138"/>
        <end position="152"/>
    </location>
</feature>
<feature type="disulfide bond" evidence="4">
    <location>
        <begin position="146"/>
        <end position="164"/>
    </location>
</feature>
<feature type="disulfide bond" evidence="4">
    <location>
        <begin position="166"/>
        <end position="175"/>
    </location>
</feature>
<feature type="disulfide bond" description="Redox-active" evidence="5">
    <location>
        <begin position="261"/>
        <end position="264"/>
    </location>
</feature>
<feature type="disulfide bond" evidence="4">
    <location>
        <begin position="292"/>
        <end position="306"/>
    </location>
</feature>
<feature type="disulfide bond" evidence="4">
    <location>
        <begin position="299"/>
        <end position="315"/>
    </location>
</feature>
<feature type="disulfide bond" evidence="4">
    <location>
        <begin position="317"/>
        <end position="328"/>
    </location>
</feature>
<feature type="mutagenesis site" description="Substrate-trapping mutant." evidence="5">
    <original>C</original>
    <variation>A</variation>
    <location>
        <position position="32"/>
    </location>
</feature>
<feature type="mutagenesis site" description="Does not act as a substrate-trapping mutant." evidence="5">
    <original>C</original>
    <variation>A</variation>
    <location>
        <position position="264"/>
    </location>
</feature>
<name>CREL2_MOUSE</name>
<evidence type="ECO:0000250" key="1"/>
<evidence type="ECO:0000250" key="2">
    <source>
        <dbReference type="UniProtKB" id="Q6UXH1"/>
    </source>
</evidence>
<evidence type="ECO:0000255" key="3"/>
<evidence type="ECO:0000255" key="4">
    <source>
        <dbReference type="PROSITE-ProRule" id="PRU00076"/>
    </source>
</evidence>
<evidence type="ECO:0000269" key="5">
    <source>
    </source>
</evidence>
<evidence type="ECO:0000305" key="6"/>
<evidence type="ECO:0000305" key="7">
    <source>
    </source>
</evidence>
<comment type="function">
    <text evidence="2 7">Protein disulfide isomerase (Probable). Might play a role in the unfolded protein response (Probable). May regulate transport of alpha4-beta2 neuronal acetylcholine receptor (By similarity).</text>
</comment>
<comment type="catalytic activity">
    <reaction evidence="7">
        <text>Catalyzes the rearrangement of -S-S- bonds in proteins.</text>
        <dbReference type="EC" id="5.3.4.1"/>
    </reaction>
</comment>
<comment type="subunit">
    <text evidence="1 2 5">Interacts with CHRNA4 (By similarity). Component of a complex containing at least CRELD2, MANF, MATN3 and PDIA4 (PubMed:23956175).</text>
</comment>
<comment type="subcellular location">
    <subcellularLocation>
        <location evidence="2">Endoplasmic reticulum</location>
    </subcellularLocation>
</comment>
<comment type="tissue specificity">
    <text evidence="5">Expressed in chondrocytes (at protein level).</text>
</comment>
<comment type="developmental stage">
    <text evidence="5">Expressed from birth.</text>
</comment>
<comment type="miscellaneous">
    <text evidence="5">Secreted under some pathological conditions such as skeletal diseases.</text>
</comment>
<comment type="similarity">
    <text evidence="6">Belongs to the CRELD family.</text>
</comment>
<proteinExistence type="evidence at protein level"/>
<accession>Q9CYA0</accession>
<sequence length="350" mass="38220">MHLLLAAAFGLLLLLPPPGAVASRKPTMCQRCRTLVDKFNQGMANTARKNFGGGNTAWEEKTLSKYEFSEIRLLEIMEGLCDSSDFECNQLLEQQEEQLEAWWQTLKKEHPNLFEWFCVHTLKACCLPGTYGPDCQECQGGSERPCSGNGYCSGDGSRQGDGSCQCHTGYKGPLCIDCTDGFFSLQRNETHSICSACDESCKTCSGPSNKDCIQCEVGWARVEDACVDVDECAAETSPCSDGQYCENVNGSYTCEDCDSTCVGCTGKGPANCKECIAGYTKESGQCTDIDECSLEEKACKRKNENCYNVPGSFVCVCPEGFEETEDACVQTAEGKVTEENPTQPPSREDL</sequence>
<reference key="1">
    <citation type="journal article" date="2005" name="Science">
        <title>The transcriptional landscape of the mammalian genome.</title>
        <authorList>
            <person name="Carninci P."/>
            <person name="Kasukawa T."/>
            <person name="Katayama S."/>
            <person name="Gough J."/>
            <person name="Frith M.C."/>
            <person name="Maeda N."/>
            <person name="Oyama R."/>
            <person name="Ravasi T."/>
            <person name="Lenhard B."/>
            <person name="Wells C."/>
            <person name="Kodzius R."/>
            <person name="Shimokawa K."/>
            <person name="Bajic V.B."/>
            <person name="Brenner S.E."/>
            <person name="Batalov S."/>
            <person name="Forrest A.R."/>
            <person name="Zavolan M."/>
            <person name="Davis M.J."/>
            <person name="Wilming L.G."/>
            <person name="Aidinis V."/>
            <person name="Allen J.E."/>
            <person name="Ambesi-Impiombato A."/>
            <person name="Apweiler R."/>
            <person name="Aturaliya R.N."/>
            <person name="Bailey T.L."/>
            <person name="Bansal M."/>
            <person name="Baxter L."/>
            <person name="Beisel K.W."/>
            <person name="Bersano T."/>
            <person name="Bono H."/>
            <person name="Chalk A.M."/>
            <person name="Chiu K.P."/>
            <person name="Choudhary V."/>
            <person name="Christoffels A."/>
            <person name="Clutterbuck D.R."/>
            <person name="Crowe M.L."/>
            <person name="Dalla E."/>
            <person name="Dalrymple B.P."/>
            <person name="de Bono B."/>
            <person name="Della Gatta G."/>
            <person name="di Bernardo D."/>
            <person name="Down T."/>
            <person name="Engstrom P."/>
            <person name="Fagiolini M."/>
            <person name="Faulkner G."/>
            <person name="Fletcher C.F."/>
            <person name="Fukushima T."/>
            <person name="Furuno M."/>
            <person name="Futaki S."/>
            <person name="Gariboldi M."/>
            <person name="Georgii-Hemming P."/>
            <person name="Gingeras T.R."/>
            <person name="Gojobori T."/>
            <person name="Green R.E."/>
            <person name="Gustincich S."/>
            <person name="Harbers M."/>
            <person name="Hayashi Y."/>
            <person name="Hensch T.K."/>
            <person name="Hirokawa N."/>
            <person name="Hill D."/>
            <person name="Huminiecki L."/>
            <person name="Iacono M."/>
            <person name="Ikeo K."/>
            <person name="Iwama A."/>
            <person name="Ishikawa T."/>
            <person name="Jakt M."/>
            <person name="Kanapin A."/>
            <person name="Katoh M."/>
            <person name="Kawasawa Y."/>
            <person name="Kelso J."/>
            <person name="Kitamura H."/>
            <person name="Kitano H."/>
            <person name="Kollias G."/>
            <person name="Krishnan S.P."/>
            <person name="Kruger A."/>
            <person name="Kummerfeld S.K."/>
            <person name="Kurochkin I.V."/>
            <person name="Lareau L.F."/>
            <person name="Lazarevic D."/>
            <person name="Lipovich L."/>
            <person name="Liu J."/>
            <person name="Liuni S."/>
            <person name="McWilliam S."/>
            <person name="Madan Babu M."/>
            <person name="Madera M."/>
            <person name="Marchionni L."/>
            <person name="Matsuda H."/>
            <person name="Matsuzawa S."/>
            <person name="Miki H."/>
            <person name="Mignone F."/>
            <person name="Miyake S."/>
            <person name="Morris K."/>
            <person name="Mottagui-Tabar S."/>
            <person name="Mulder N."/>
            <person name="Nakano N."/>
            <person name="Nakauchi H."/>
            <person name="Ng P."/>
            <person name="Nilsson R."/>
            <person name="Nishiguchi S."/>
            <person name="Nishikawa S."/>
            <person name="Nori F."/>
            <person name="Ohara O."/>
            <person name="Okazaki Y."/>
            <person name="Orlando V."/>
            <person name="Pang K.C."/>
            <person name="Pavan W.J."/>
            <person name="Pavesi G."/>
            <person name="Pesole G."/>
            <person name="Petrovsky N."/>
            <person name="Piazza S."/>
            <person name="Reed J."/>
            <person name="Reid J.F."/>
            <person name="Ring B.Z."/>
            <person name="Ringwald M."/>
            <person name="Rost B."/>
            <person name="Ruan Y."/>
            <person name="Salzberg S.L."/>
            <person name="Sandelin A."/>
            <person name="Schneider C."/>
            <person name="Schoenbach C."/>
            <person name="Sekiguchi K."/>
            <person name="Semple C.A."/>
            <person name="Seno S."/>
            <person name="Sessa L."/>
            <person name="Sheng Y."/>
            <person name="Shibata Y."/>
            <person name="Shimada H."/>
            <person name="Shimada K."/>
            <person name="Silva D."/>
            <person name="Sinclair B."/>
            <person name="Sperling S."/>
            <person name="Stupka E."/>
            <person name="Sugiura K."/>
            <person name="Sultana R."/>
            <person name="Takenaka Y."/>
            <person name="Taki K."/>
            <person name="Tammoja K."/>
            <person name="Tan S.L."/>
            <person name="Tang S."/>
            <person name="Taylor M.S."/>
            <person name="Tegner J."/>
            <person name="Teichmann S.A."/>
            <person name="Ueda H.R."/>
            <person name="van Nimwegen E."/>
            <person name="Verardo R."/>
            <person name="Wei C.L."/>
            <person name="Yagi K."/>
            <person name="Yamanishi H."/>
            <person name="Zabarovsky E."/>
            <person name="Zhu S."/>
            <person name="Zimmer A."/>
            <person name="Hide W."/>
            <person name="Bult C."/>
            <person name="Grimmond S.M."/>
            <person name="Teasdale R.D."/>
            <person name="Liu E.T."/>
            <person name="Brusic V."/>
            <person name="Quackenbush J."/>
            <person name="Wahlestedt C."/>
            <person name="Mattick J.S."/>
            <person name="Hume D.A."/>
            <person name="Kai C."/>
            <person name="Sasaki D."/>
            <person name="Tomaru Y."/>
            <person name="Fukuda S."/>
            <person name="Kanamori-Katayama M."/>
            <person name="Suzuki M."/>
            <person name="Aoki J."/>
            <person name="Arakawa T."/>
            <person name="Iida J."/>
            <person name="Imamura K."/>
            <person name="Itoh M."/>
            <person name="Kato T."/>
            <person name="Kawaji H."/>
            <person name="Kawagashira N."/>
            <person name="Kawashima T."/>
            <person name="Kojima M."/>
            <person name="Kondo S."/>
            <person name="Konno H."/>
            <person name="Nakano K."/>
            <person name="Ninomiya N."/>
            <person name="Nishio T."/>
            <person name="Okada M."/>
            <person name="Plessy C."/>
            <person name="Shibata K."/>
            <person name="Shiraki T."/>
            <person name="Suzuki S."/>
            <person name="Tagami M."/>
            <person name="Waki K."/>
            <person name="Watahiki A."/>
            <person name="Okamura-Oho Y."/>
            <person name="Suzuki H."/>
            <person name="Kawai J."/>
            <person name="Hayashizaki Y."/>
        </authorList>
    </citation>
    <scope>NUCLEOTIDE SEQUENCE [LARGE SCALE MRNA]</scope>
    <source>
        <strain>C57BL/6J</strain>
        <tissue>Embryo</tissue>
        <tissue>Lung</tissue>
    </source>
</reference>
<reference key="2">
    <citation type="journal article" date="2004" name="Genome Res.">
        <title>The status, quality, and expansion of the NIH full-length cDNA project: the Mammalian Gene Collection (MGC).</title>
        <authorList>
            <consortium name="The MGC Project Team"/>
        </authorList>
    </citation>
    <scope>NUCLEOTIDE SEQUENCE [LARGE SCALE MRNA]</scope>
    <source>
        <strain>FVB/N</strain>
        <tissue>Colon</tissue>
    </source>
</reference>
<reference key="3">
    <citation type="journal article" date="2010" name="Cell">
        <title>A tissue-specific atlas of mouse protein phosphorylation and expression.</title>
        <authorList>
            <person name="Huttlin E.L."/>
            <person name="Jedrychowski M.P."/>
            <person name="Elias J.E."/>
            <person name="Goswami T."/>
            <person name="Rad R."/>
            <person name="Beausoleil S.A."/>
            <person name="Villen J."/>
            <person name="Haas W."/>
            <person name="Sowa M.E."/>
            <person name="Gygi S.P."/>
        </authorList>
    </citation>
    <scope>IDENTIFICATION BY MASS SPECTROMETRY [LARGE SCALE ANALYSIS]</scope>
    <source>
        <tissue>Kidney</tissue>
        <tissue>Liver</tissue>
        <tissue>Lung</tissue>
        <tissue>Pancreas</tissue>
        <tissue>Spleen</tissue>
        <tissue>Testis</tissue>
    </source>
</reference>
<reference key="4">
    <citation type="journal article" date="2013" name="Hum. Mol. Genet.">
        <title>Armet/Manf and Creld2 are components of a specialized ER stress response provoked by inappropriate formation of disulphide bonds: implications for genetic skeletal diseases.</title>
        <authorList>
            <person name="Hartley C.L."/>
            <person name="Edwards S."/>
            <person name="Mullan L."/>
            <person name="Bell P.A."/>
            <person name="Fresquet M."/>
            <person name="Boot-Handford R.P."/>
            <person name="Briggs M.D."/>
        </authorList>
    </citation>
    <scope>FUNCTION</scope>
    <scope>CATALYTIC ACTIVITY</scope>
    <scope>IDENTIFICATION IN COMPLEX WITH MANF; MATN3 AND PDIA4</scope>
    <scope>TISSUE SPECIFICITY</scope>
    <scope>DEVELOPMENTAL STAGE</scope>
    <scope>MUTAGENESIS OF CYS-32 AND CYS-264</scope>
</reference>